<feature type="signal peptide" evidence="1">
    <location>
        <begin position="1"/>
        <end position="24"/>
    </location>
</feature>
<feature type="peptide" id="PRO_0000269023" description="Arabinogalactan protein 21" evidence="1">
    <location>
        <begin position="25"/>
        <end position="36"/>
    </location>
</feature>
<feature type="propeptide" id="PRO_0000269024" description="Removed in mature form" evidence="4">
    <location>
        <begin position="37"/>
        <end position="58"/>
    </location>
</feature>
<feature type="modified residue" description="4-hydroxyproline" evidence="1">
    <location>
        <position position="30"/>
    </location>
</feature>
<feature type="modified residue" description="4-hydroxyproline" evidence="1">
    <location>
        <position position="32"/>
    </location>
</feature>
<feature type="modified residue" description="4-hydroxyproline" evidence="1">
    <location>
        <position position="34"/>
    </location>
</feature>
<feature type="lipid moiety-binding region" description="GPI-anchor amidated serine" evidence="1">
    <location>
        <position position="36"/>
    </location>
</feature>
<feature type="glycosylation site" description="O-linked (Ara...) hydroxyproline" evidence="4">
    <location>
        <position position="30"/>
    </location>
</feature>
<feature type="glycosylation site" description="O-linked (Ara...) hydroxyproline" evidence="4">
    <location>
        <position position="32"/>
    </location>
</feature>
<feature type="glycosylation site" description="O-linked (Ara...) hydroxyproline" evidence="4">
    <location>
        <position position="34"/>
    </location>
</feature>
<name>AGP21_ARATH</name>
<evidence type="ECO:0000269" key="1">
    <source>
    </source>
</evidence>
<evidence type="ECO:0000303" key="2">
    <source>
    </source>
</evidence>
<evidence type="ECO:0000305" key="3"/>
<evidence type="ECO:0000305" key="4">
    <source>
    </source>
</evidence>
<keyword id="KW-1003">Cell membrane</keyword>
<keyword id="KW-0903">Direct protein sequencing</keyword>
<keyword id="KW-0325">Glycoprotein</keyword>
<keyword id="KW-0336">GPI-anchor</keyword>
<keyword id="KW-0379">Hydroxylation</keyword>
<keyword id="KW-0449">Lipoprotein</keyword>
<keyword id="KW-0472">Membrane</keyword>
<keyword id="KW-0654">Proteoglycan</keyword>
<keyword id="KW-1185">Reference proteome</keyword>
<keyword id="KW-0732">Signal</keyword>
<comment type="function">
    <text evidence="3">Proteoglycan that seems to be implicated in diverse developmental roles such as differentiation, cell-cell recognition, embryogenesis and programmed cell death.</text>
</comment>
<comment type="subcellular location">
    <subcellularLocation>
        <location evidence="3">Cell membrane</location>
        <topology evidence="1">Lipid-anchor</topology>
        <topology evidence="1">GPI-anchor</topology>
    </subcellularLocation>
</comment>
<comment type="PTM">
    <text evidence="1">Contains 4-hydroxyproline; hydroxylated on Pro-30, Pro-32 and Pro-34.</text>
</comment>
<comment type="PTM">
    <text evidence="4">O-glycosylated on hydroxyprolines; noncontiguous hydroxylproline residues are glycosylated with arabinogalactan.</text>
</comment>
<comment type="similarity">
    <text evidence="3">Belongs to the AG-peptide AGP family.</text>
</comment>
<organism>
    <name type="scientific">Arabidopsis thaliana</name>
    <name type="common">Mouse-ear cress</name>
    <dbReference type="NCBI Taxonomy" id="3702"/>
    <lineage>
        <taxon>Eukaryota</taxon>
        <taxon>Viridiplantae</taxon>
        <taxon>Streptophyta</taxon>
        <taxon>Embryophyta</taxon>
        <taxon>Tracheophyta</taxon>
        <taxon>Spermatophyta</taxon>
        <taxon>Magnoliopsida</taxon>
        <taxon>eudicotyledons</taxon>
        <taxon>Gunneridae</taxon>
        <taxon>Pentapetalae</taxon>
        <taxon>rosids</taxon>
        <taxon>malvids</taxon>
        <taxon>Brassicales</taxon>
        <taxon>Brassicaceae</taxon>
        <taxon>Camelineae</taxon>
        <taxon>Arabidopsis</taxon>
    </lineage>
</organism>
<dbReference type="EMBL" id="AC027034">
    <property type="protein sequence ID" value="AAG51571.1"/>
    <property type="molecule type" value="Genomic_DNA"/>
</dbReference>
<dbReference type="EMBL" id="CP002684">
    <property type="protein sequence ID" value="AEE33229.1"/>
    <property type="molecule type" value="Genomic_DNA"/>
</dbReference>
<dbReference type="EMBL" id="AY093045">
    <property type="protein sequence ID" value="AAM13044.1"/>
    <property type="molecule type" value="mRNA"/>
</dbReference>
<dbReference type="EMBL" id="BT003426">
    <property type="protein sequence ID" value="AAO30089.1"/>
    <property type="molecule type" value="mRNA"/>
</dbReference>
<dbReference type="EMBL" id="AY087780">
    <property type="protein sequence ID" value="AAM65316.1"/>
    <property type="molecule type" value="mRNA"/>
</dbReference>
<dbReference type="PIR" id="E96595">
    <property type="entry name" value="E96595"/>
</dbReference>
<dbReference type="RefSeq" id="NP_564686.1">
    <property type="nucleotide sequence ID" value="NM_104409.3"/>
</dbReference>
<dbReference type="STRING" id="3702.Q9C8A4"/>
<dbReference type="GlyCosmos" id="Q9C8A4">
    <property type="glycosylation" value="3 sites, No reported glycans"/>
</dbReference>
<dbReference type="PaxDb" id="3702-AT1G55330.1"/>
<dbReference type="EnsemblPlants" id="AT1G55330.1">
    <property type="protein sequence ID" value="AT1G55330.1"/>
    <property type="gene ID" value="AT1G55330"/>
</dbReference>
<dbReference type="GeneID" id="841979"/>
<dbReference type="Gramene" id="AT1G55330.1">
    <property type="protein sequence ID" value="AT1G55330.1"/>
    <property type="gene ID" value="AT1G55330"/>
</dbReference>
<dbReference type="KEGG" id="ath:AT1G55330"/>
<dbReference type="Araport" id="AT1G55330"/>
<dbReference type="TAIR" id="AT1G55330">
    <property type="gene designation" value="AGP21"/>
</dbReference>
<dbReference type="HOGENOM" id="CLU_183441_3_0_1"/>
<dbReference type="InParanoid" id="Q9C8A4"/>
<dbReference type="OMA" id="FAFMVHP"/>
<dbReference type="PRO" id="PR:Q9C8A4"/>
<dbReference type="Proteomes" id="UP000006548">
    <property type="component" value="Chromosome 1"/>
</dbReference>
<dbReference type="ExpressionAtlas" id="Q9C8A4">
    <property type="expression patterns" value="baseline and differential"/>
</dbReference>
<dbReference type="GO" id="GO:0005886">
    <property type="term" value="C:plasma membrane"/>
    <property type="evidence" value="ECO:0007669"/>
    <property type="project" value="UniProtKB-SubCell"/>
</dbReference>
<dbReference type="GO" id="GO:0098552">
    <property type="term" value="C:side of membrane"/>
    <property type="evidence" value="ECO:0007669"/>
    <property type="project" value="UniProtKB-KW"/>
</dbReference>
<dbReference type="InterPro" id="IPR039281">
    <property type="entry name" value="AGP3/12/13/14/21"/>
</dbReference>
<dbReference type="PANTHER" id="PTHR34114">
    <property type="entry name" value="ARABINOGALACTAN PEPTIDE 1"/>
    <property type="match status" value="1"/>
</dbReference>
<dbReference type="PANTHER" id="PTHR34114:SF23">
    <property type="entry name" value="ARABINOGALACTAN PROTEIN 21"/>
    <property type="match status" value="1"/>
</dbReference>
<proteinExistence type="evidence at protein level"/>
<reference key="1">
    <citation type="journal article" date="2000" name="Nature">
        <title>Sequence and analysis of chromosome 1 of the plant Arabidopsis thaliana.</title>
        <authorList>
            <person name="Theologis A."/>
            <person name="Ecker J.R."/>
            <person name="Palm C.J."/>
            <person name="Federspiel N.A."/>
            <person name="Kaul S."/>
            <person name="White O."/>
            <person name="Alonso J."/>
            <person name="Altafi H."/>
            <person name="Araujo R."/>
            <person name="Bowman C.L."/>
            <person name="Brooks S.Y."/>
            <person name="Buehler E."/>
            <person name="Chan A."/>
            <person name="Chao Q."/>
            <person name="Chen H."/>
            <person name="Cheuk R.F."/>
            <person name="Chin C.W."/>
            <person name="Chung M.K."/>
            <person name="Conn L."/>
            <person name="Conway A.B."/>
            <person name="Conway A.R."/>
            <person name="Creasy T.H."/>
            <person name="Dewar K."/>
            <person name="Dunn P."/>
            <person name="Etgu P."/>
            <person name="Feldblyum T.V."/>
            <person name="Feng J.-D."/>
            <person name="Fong B."/>
            <person name="Fujii C.Y."/>
            <person name="Gill J.E."/>
            <person name="Goldsmith A.D."/>
            <person name="Haas B."/>
            <person name="Hansen N.F."/>
            <person name="Hughes B."/>
            <person name="Huizar L."/>
            <person name="Hunter J.L."/>
            <person name="Jenkins J."/>
            <person name="Johnson-Hopson C."/>
            <person name="Khan S."/>
            <person name="Khaykin E."/>
            <person name="Kim C.J."/>
            <person name="Koo H.L."/>
            <person name="Kremenetskaia I."/>
            <person name="Kurtz D.B."/>
            <person name="Kwan A."/>
            <person name="Lam B."/>
            <person name="Langin-Hooper S."/>
            <person name="Lee A."/>
            <person name="Lee J.M."/>
            <person name="Lenz C.A."/>
            <person name="Li J.H."/>
            <person name="Li Y.-P."/>
            <person name="Lin X."/>
            <person name="Liu S.X."/>
            <person name="Liu Z.A."/>
            <person name="Luros J.S."/>
            <person name="Maiti R."/>
            <person name="Marziali A."/>
            <person name="Militscher J."/>
            <person name="Miranda M."/>
            <person name="Nguyen M."/>
            <person name="Nierman W.C."/>
            <person name="Osborne B.I."/>
            <person name="Pai G."/>
            <person name="Peterson J."/>
            <person name="Pham P.K."/>
            <person name="Rizzo M."/>
            <person name="Rooney T."/>
            <person name="Rowley D."/>
            <person name="Sakano H."/>
            <person name="Salzberg S.L."/>
            <person name="Schwartz J.R."/>
            <person name="Shinn P."/>
            <person name="Southwick A.M."/>
            <person name="Sun H."/>
            <person name="Tallon L.J."/>
            <person name="Tambunga G."/>
            <person name="Toriumi M.J."/>
            <person name="Town C.D."/>
            <person name="Utterback T."/>
            <person name="Van Aken S."/>
            <person name="Vaysberg M."/>
            <person name="Vysotskaia V.S."/>
            <person name="Walker M."/>
            <person name="Wu D."/>
            <person name="Yu G."/>
            <person name="Fraser C.M."/>
            <person name="Venter J.C."/>
            <person name="Davis R.W."/>
        </authorList>
    </citation>
    <scope>NUCLEOTIDE SEQUENCE [LARGE SCALE GENOMIC DNA]</scope>
    <source>
        <strain>cv. Columbia</strain>
    </source>
</reference>
<reference key="2">
    <citation type="journal article" date="2017" name="Plant J.">
        <title>Araport11: a complete reannotation of the Arabidopsis thaliana reference genome.</title>
        <authorList>
            <person name="Cheng C.Y."/>
            <person name="Krishnakumar V."/>
            <person name="Chan A.P."/>
            <person name="Thibaud-Nissen F."/>
            <person name="Schobel S."/>
            <person name="Town C.D."/>
        </authorList>
    </citation>
    <scope>GENOME REANNOTATION</scope>
    <source>
        <strain>cv. Columbia</strain>
    </source>
</reference>
<reference key="3">
    <citation type="journal article" date="2003" name="Science">
        <title>Empirical analysis of transcriptional activity in the Arabidopsis genome.</title>
        <authorList>
            <person name="Yamada K."/>
            <person name="Lim J."/>
            <person name="Dale J.M."/>
            <person name="Chen H."/>
            <person name="Shinn P."/>
            <person name="Palm C.J."/>
            <person name="Southwick A.M."/>
            <person name="Wu H.C."/>
            <person name="Kim C.J."/>
            <person name="Nguyen M."/>
            <person name="Pham P.K."/>
            <person name="Cheuk R.F."/>
            <person name="Karlin-Newmann G."/>
            <person name="Liu S.X."/>
            <person name="Lam B."/>
            <person name="Sakano H."/>
            <person name="Wu T."/>
            <person name="Yu G."/>
            <person name="Miranda M."/>
            <person name="Quach H.L."/>
            <person name="Tripp M."/>
            <person name="Chang C.H."/>
            <person name="Lee J.M."/>
            <person name="Toriumi M.J."/>
            <person name="Chan M.M."/>
            <person name="Tang C.C."/>
            <person name="Onodera C.S."/>
            <person name="Deng J.M."/>
            <person name="Akiyama K."/>
            <person name="Ansari Y."/>
            <person name="Arakawa T."/>
            <person name="Banh J."/>
            <person name="Banno F."/>
            <person name="Bowser L."/>
            <person name="Brooks S.Y."/>
            <person name="Carninci P."/>
            <person name="Chao Q."/>
            <person name="Choy N."/>
            <person name="Enju A."/>
            <person name="Goldsmith A.D."/>
            <person name="Gurjal M."/>
            <person name="Hansen N.F."/>
            <person name="Hayashizaki Y."/>
            <person name="Johnson-Hopson C."/>
            <person name="Hsuan V.W."/>
            <person name="Iida K."/>
            <person name="Karnes M."/>
            <person name="Khan S."/>
            <person name="Koesema E."/>
            <person name="Ishida J."/>
            <person name="Jiang P.X."/>
            <person name="Jones T."/>
            <person name="Kawai J."/>
            <person name="Kamiya A."/>
            <person name="Meyers C."/>
            <person name="Nakajima M."/>
            <person name="Narusaka M."/>
            <person name="Seki M."/>
            <person name="Sakurai T."/>
            <person name="Satou M."/>
            <person name="Tamse R."/>
            <person name="Vaysberg M."/>
            <person name="Wallender E.K."/>
            <person name="Wong C."/>
            <person name="Yamamura Y."/>
            <person name="Yuan S."/>
            <person name="Shinozaki K."/>
            <person name="Davis R.W."/>
            <person name="Theologis A."/>
            <person name="Ecker J.R."/>
        </authorList>
    </citation>
    <scope>NUCLEOTIDE SEQUENCE [LARGE SCALE MRNA]</scope>
    <source>
        <strain>cv. Columbia</strain>
    </source>
</reference>
<reference key="4">
    <citation type="submission" date="2002-03" db="EMBL/GenBank/DDBJ databases">
        <title>Full-length cDNA from Arabidopsis thaliana.</title>
        <authorList>
            <person name="Brover V.V."/>
            <person name="Troukhan M.E."/>
            <person name="Alexandrov N.A."/>
            <person name="Lu Y.-P."/>
            <person name="Flavell R.B."/>
            <person name="Feldmann K.A."/>
        </authorList>
    </citation>
    <scope>NUCLEOTIDE SEQUENCE [LARGE SCALE MRNA]</scope>
</reference>
<reference key="5">
    <citation type="journal article" date="2004" name="J. Biol. Chem.">
        <title>Post-translational modifications of arabinogalactan-peptides of Arabidopsis thaliana. Endoplasmic reticulum and glycosylphosphatidylinositol-anchor signal cleavage sites and hydroxylation of proline.</title>
        <authorList>
            <person name="Schultz C.J."/>
            <person name="Ferguson K.L."/>
            <person name="Lahnstein J."/>
            <person name="Bacic A."/>
        </authorList>
    </citation>
    <scope>PROTEIN SEQUENCE OF 25-36</scope>
    <scope>HYDROXYLATION AT PRO-30; PRO-32 AND PRO-34</scope>
    <scope>GLYCOSYLATION AT PRO-30; PRO-32 AND PRO-34</scope>
    <scope>GPI-ANCHOR AT SER-36</scope>
</reference>
<reference key="6">
    <citation type="journal article" date="2002" name="Plant Physiol.">
        <title>Using genomic resources to guide research directions. The arabinogalactan protein gene family as a test case.</title>
        <authorList>
            <person name="Schultz C.J."/>
            <person name="Rumsewicz M.P."/>
            <person name="Johnson K.L."/>
            <person name="Jones B.J."/>
            <person name="Gaspar Y.M."/>
            <person name="Bacic A."/>
        </authorList>
    </citation>
    <scope>GENE FAMILY</scope>
    <scope>NOMENCLATURE</scope>
</reference>
<protein>
    <recommendedName>
        <fullName evidence="2">Arabinogalactan protein 21</fullName>
        <shortName evidence="2">AtAGP21</shortName>
    </recommendedName>
    <alternativeName>
        <fullName evidence="2">Arabinogalactan peptide 21</fullName>
        <shortName evidence="2">AG-peptide 21</shortName>
    </alternativeName>
</protein>
<gene>
    <name evidence="2" type="primary">AGP21</name>
    <name type="ordered locus">At1g55330</name>
    <name type="ORF">F7A10.11</name>
</gene>
<accession>Q9C8A4</accession>
<sequence>MEAMKMKMMVFIMVVAVAFSAATAATVEAPAPSPTSDAAMFVPALFASVVALASGFIF</sequence>